<name>MOAC_ACTP2</name>
<gene>
    <name evidence="1" type="primary">moaC</name>
    <name type="ordered locus">APL_0691</name>
</gene>
<dbReference type="EC" id="4.6.1.17" evidence="1"/>
<dbReference type="EMBL" id="CP000569">
    <property type="protein sequence ID" value="ABN73791.1"/>
    <property type="molecule type" value="Genomic_DNA"/>
</dbReference>
<dbReference type="RefSeq" id="WP_005597027.1">
    <property type="nucleotide sequence ID" value="NC_009053.1"/>
</dbReference>
<dbReference type="SMR" id="A3N055"/>
<dbReference type="STRING" id="416269.APL_0691"/>
<dbReference type="EnsemblBacteria" id="ABN73791">
    <property type="protein sequence ID" value="ABN73791"/>
    <property type="gene ID" value="APL_0691"/>
</dbReference>
<dbReference type="GeneID" id="92744839"/>
<dbReference type="KEGG" id="apl:APL_0691"/>
<dbReference type="eggNOG" id="COG0315">
    <property type="taxonomic scope" value="Bacteria"/>
</dbReference>
<dbReference type="HOGENOM" id="CLU_074693_1_1_6"/>
<dbReference type="UniPathway" id="UPA00344"/>
<dbReference type="Proteomes" id="UP000001432">
    <property type="component" value="Chromosome"/>
</dbReference>
<dbReference type="GO" id="GO:0061799">
    <property type="term" value="F:cyclic pyranopterin monophosphate synthase activity"/>
    <property type="evidence" value="ECO:0007669"/>
    <property type="project" value="UniProtKB-UniRule"/>
</dbReference>
<dbReference type="GO" id="GO:0061798">
    <property type="term" value="F:GTP 3',8'-cyclase activity"/>
    <property type="evidence" value="ECO:0007669"/>
    <property type="project" value="TreeGrafter"/>
</dbReference>
<dbReference type="GO" id="GO:0006777">
    <property type="term" value="P:Mo-molybdopterin cofactor biosynthetic process"/>
    <property type="evidence" value="ECO:0007669"/>
    <property type="project" value="UniProtKB-UniRule"/>
</dbReference>
<dbReference type="CDD" id="cd01420">
    <property type="entry name" value="MoaC_PE"/>
    <property type="match status" value="1"/>
</dbReference>
<dbReference type="FunFam" id="3.30.70.640:FF:000001">
    <property type="entry name" value="Cyclic pyranopterin monophosphate synthase"/>
    <property type="match status" value="1"/>
</dbReference>
<dbReference type="Gene3D" id="3.30.70.640">
    <property type="entry name" value="Molybdopterin cofactor biosynthesis C (MoaC) domain"/>
    <property type="match status" value="1"/>
</dbReference>
<dbReference type="HAMAP" id="MF_01224_B">
    <property type="entry name" value="MoaC_B"/>
    <property type="match status" value="1"/>
</dbReference>
<dbReference type="InterPro" id="IPR023045">
    <property type="entry name" value="MoaC"/>
</dbReference>
<dbReference type="InterPro" id="IPR047594">
    <property type="entry name" value="MoaC_bact/euk"/>
</dbReference>
<dbReference type="InterPro" id="IPR036522">
    <property type="entry name" value="MoaC_sf"/>
</dbReference>
<dbReference type="InterPro" id="IPR050105">
    <property type="entry name" value="MoCo_biosynth_MoaA/MoaC"/>
</dbReference>
<dbReference type="InterPro" id="IPR002820">
    <property type="entry name" value="Mopterin_CF_biosynth-C_dom"/>
</dbReference>
<dbReference type="NCBIfam" id="TIGR00581">
    <property type="entry name" value="moaC"/>
    <property type="match status" value="1"/>
</dbReference>
<dbReference type="NCBIfam" id="NF006870">
    <property type="entry name" value="PRK09364.1"/>
    <property type="match status" value="1"/>
</dbReference>
<dbReference type="PANTHER" id="PTHR22960:SF0">
    <property type="entry name" value="MOLYBDENUM COFACTOR BIOSYNTHESIS PROTEIN 1"/>
    <property type="match status" value="1"/>
</dbReference>
<dbReference type="PANTHER" id="PTHR22960">
    <property type="entry name" value="MOLYBDOPTERIN COFACTOR SYNTHESIS PROTEIN A"/>
    <property type="match status" value="1"/>
</dbReference>
<dbReference type="Pfam" id="PF01967">
    <property type="entry name" value="MoaC"/>
    <property type="match status" value="1"/>
</dbReference>
<dbReference type="SUPFAM" id="SSF55040">
    <property type="entry name" value="Molybdenum cofactor biosynthesis protein C, MoaC"/>
    <property type="match status" value="1"/>
</dbReference>
<organism>
    <name type="scientific">Actinobacillus pleuropneumoniae serotype 5b (strain L20)</name>
    <dbReference type="NCBI Taxonomy" id="416269"/>
    <lineage>
        <taxon>Bacteria</taxon>
        <taxon>Pseudomonadati</taxon>
        <taxon>Pseudomonadota</taxon>
        <taxon>Gammaproteobacteria</taxon>
        <taxon>Pasteurellales</taxon>
        <taxon>Pasteurellaceae</taxon>
        <taxon>Actinobacillus</taxon>
    </lineage>
</organism>
<sequence length="158" mass="17295">MNQFTHINTNGEANMVDVSMKQETVRVARAEAFVSMNAETLQMIISGNHHKGDVFATARIAGIQAAKRTWELIPLCHPLLLSKVEVQLEALPETNQVRIESLCKLTGKTGVEMEALTAASVAALTIYDMCKAVQKDMVIENVRLLHKSGGKSGEFNAE</sequence>
<accession>A3N055</accession>
<reference key="1">
    <citation type="journal article" date="2008" name="J. Bacteriol.">
        <title>The complete genome sequence of Actinobacillus pleuropneumoniae L20 (serotype 5b).</title>
        <authorList>
            <person name="Foote S.J."/>
            <person name="Bosse J.T."/>
            <person name="Bouevitch A.B."/>
            <person name="Langford P.R."/>
            <person name="Young N.M."/>
            <person name="Nash J.H.E."/>
        </authorList>
    </citation>
    <scope>NUCLEOTIDE SEQUENCE [LARGE SCALE GENOMIC DNA]</scope>
    <source>
        <strain>L20</strain>
    </source>
</reference>
<protein>
    <recommendedName>
        <fullName evidence="1">Cyclic pyranopterin monophosphate synthase</fullName>
        <ecNumber evidence="1">4.6.1.17</ecNumber>
    </recommendedName>
    <alternativeName>
        <fullName evidence="1">Molybdenum cofactor biosynthesis protein C</fullName>
    </alternativeName>
</protein>
<keyword id="KW-0456">Lyase</keyword>
<keyword id="KW-0501">Molybdenum cofactor biosynthesis</keyword>
<keyword id="KW-1185">Reference proteome</keyword>
<comment type="function">
    <text evidence="1">Catalyzes the conversion of (8S)-3',8-cyclo-7,8-dihydroguanosine 5'-triphosphate to cyclic pyranopterin monophosphate (cPMP).</text>
</comment>
<comment type="catalytic activity">
    <reaction evidence="1">
        <text>(8S)-3',8-cyclo-7,8-dihydroguanosine 5'-triphosphate = cyclic pyranopterin phosphate + diphosphate</text>
        <dbReference type="Rhea" id="RHEA:49580"/>
        <dbReference type="ChEBI" id="CHEBI:33019"/>
        <dbReference type="ChEBI" id="CHEBI:59648"/>
        <dbReference type="ChEBI" id="CHEBI:131766"/>
        <dbReference type="EC" id="4.6.1.17"/>
    </reaction>
</comment>
<comment type="pathway">
    <text evidence="1">Cofactor biosynthesis; molybdopterin biosynthesis.</text>
</comment>
<comment type="subunit">
    <text evidence="1">Homohexamer; trimer of dimers.</text>
</comment>
<comment type="similarity">
    <text evidence="1">Belongs to the MoaC family.</text>
</comment>
<proteinExistence type="inferred from homology"/>
<feature type="chain" id="PRO_1000054061" description="Cyclic pyranopterin monophosphate synthase">
    <location>
        <begin position="1"/>
        <end position="158"/>
    </location>
</feature>
<feature type="active site" evidence="1">
    <location>
        <position position="128"/>
    </location>
</feature>
<feature type="binding site" evidence="1">
    <location>
        <begin position="75"/>
        <end position="77"/>
    </location>
    <ligand>
        <name>substrate</name>
    </ligand>
</feature>
<feature type="binding site" evidence="1">
    <location>
        <begin position="113"/>
        <end position="114"/>
    </location>
    <ligand>
        <name>substrate</name>
    </ligand>
</feature>
<evidence type="ECO:0000255" key="1">
    <source>
        <dbReference type="HAMAP-Rule" id="MF_01224"/>
    </source>
</evidence>